<dbReference type="EMBL" id="AE014299">
    <property type="protein sequence ID" value="AAN54124.2"/>
    <property type="molecule type" value="Genomic_DNA"/>
</dbReference>
<dbReference type="RefSeq" id="NP_716679.2">
    <property type="nucleotide sequence ID" value="NC_004347.2"/>
</dbReference>
<dbReference type="SMR" id="Q8EI02"/>
<dbReference type="STRING" id="211586.SO_1051"/>
<dbReference type="PaxDb" id="211586-SO_1051"/>
<dbReference type="KEGG" id="son:SO_1051"/>
<dbReference type="PATRIC" id="fig|211586.12.peg.1007"/>
<dbReference type="eggNOG" id="COG3131">
    <property type="taxonomic scope" value="Bacteria"/>
</dbReference>
<dbReference type="HOGENOM" id="CLU_023403_2_0_6"/>
<dbReference type="OrthoDB" id="335750at2"/>
<dbReference type="PhylomeDB" id="Q8EI02"/>
<dbReference type="BioCyc" id="SONE211586:G1GMP-972-MONOMER"/>
<dbReference type="UniPathway" id="UPA00637"/>
<dbReference type="Proteomes" id="UP000008186">
    <property type="component" value="Chromosome"/>
</dbReference>
<dbReference type="GO" id="GO:0030288">
    <property type="term" value="C:outer membrane-bounded periplasmic space"/>
    <property type="evidence" value="ECO:0000318"/>
    <property type="project" value="GO_Central"/>
</dbReference>
<dbReference type="GO" id="GO:0030246">
    <property type="term" value="F:carbohydrate binding"/>
    <property type="evidence" value="ECO:0007669"/>
    <property type="project" value="InterPro"/>
</dbReference>
<dbReference type="GO" id="GO:0003824">
    <property type="term" value="F:catalytic activity"/>
    <property type="evidence" value="ECO:0007669"/>
    <property type="project" value="InterPro"/>
</dbReference>
<dbReference type="GO" id="GO:0051274">
    <property type="term" value="P:beta-glucan biosynthetic process"/>
    <property type="evidence" value="ECO:0000318"/>
    <property type="project" value="GO_Central"/>
</dbReference>
<dbReference type="FunFam" id="2.70.98.10:FF:000001">
    <property type="entry name" value="Glucans biosynthesis protein G"/>
    <property type="match status" value="1"/>
</dbReference>
<dbReference type="Gene3D" id="2.70.98.10">
    <property type="match status" value="1"/>
</dbReference>
<dbReference type="Gene3D" id="2.60.40.10">
    <property type="entry name" value="Immunoglobulins"/>
    <property type="match status" value="1"/>
</dbReference>
<dbReference type="HAMAP" id="MF_01068">
    <property type="entry name" value="MdoD_OpgD"/>
    <property type="match status" value="1"/>
</dbReference>
<dbReference type="InterPro" id="IPR011013">
    <property type="entry name" value="Gal_mutarotase_sf_dom"/>
</dbReference>
<dbReference type="InterPro" id="IPR014718">
    <property type="entry name" value="GH-type_carb-bd"/>
</dbReference>
<dbReference type="InterPro" id="IPR023724">
    <property type="entry name" value="Glucan_biosyn_MdoD"/>
</dbReference>
<dbReference type="InterPro" id="IPR014438">
    <property type="entry name" value="Glucan_biosyn_MdoG/MdoD"/>
</dbReference>
<dbReference type="InterPro" id="IPR007444">
    <property type="entry name" value="Glucan_biosyn_MdoG_C"/>
</dbReference>
<dbReference type="InterPro" id="IPR013783">
    <property type="entry name" value="Ig-like_fold"/>
</dbReference>
<dbReference type="InterPro" id="IPR014756">
    <property type="entry name" value="Ig_E-set"/>
</dbReference>
<dbReference type="PANTHER" id="PTHR30504">
    <property type="entry name" value="GLUCANS BIOSYNTHESIS PROTEIN"/>
    <property type="match status" value="1"/>
</dbReference>
<dbReference type="PANTHER" id="PTHR30504:SF3">
    <property type="entry name" value="GLUCANS BIOSYNTHESIS PROTEIN D"/>
    <property type="match status" value="1"/>
</dbReference>
<dbReference type="Pfam" id="PF04349">
    <property type="entry name" value="MdoG"/>
    <property type="match status" value="1"/>
</dbReference>
<dbReference type="PIRSF" id="PIRSF006281">
    <property type="entry name" value="MdoG"/>
    <property type="match status" value="1"/>
</dbReference>
<dbReference type="SUPFAM" id="SSF81296">
    <property type="entry name" value="E set domains"/>
    <property type="match status" value="1"/>
</dbReference>
<dbReference type="SUPFAM" id="SSF74650">
    <property type="entry name" value="Galactose mutarotase-like"/>
    <property type="match status" value="1"/>
</dbReference>
<proteinExistence type="inferred from homology"/>
<name>OPGD_SHEON</name>
<evidence type="ECO:0000250" key="1"/>
<evidence type="ECO:0000255" key="2"/>
<evidence type="ECO:0000305" key="3"/>
<comment type="function">
    <text evidence="1">Probably involved in the control of the structural glucose backbone of osmoregulated periplasmic glucans (OPGs).</text>
</comment>
<comment type="pathway">
    <text>Glycan metabolism; osmoregulated periplasmic glucan (OPG) biosynthesis.</text>
</comment>
<comment type="subcellular location">
    <subcellularLocation>
        <location evidence="1">Periplasm</location>
    </subcellularLocation>
</comment>
<comment type="similarity">
    <text evidence="3">Belongs to the OpgD/OpgG family.</text>
</comment>
<feature type="signal peptide" evidence="2">
    <location>
        <begin position="1"/>
        <end position="34"/>
    </location>
</feature>
<feature type="chain" id="PRO_0000020214" description="Probable glucans biosynthesis protein D">
    <location>
        <begin position="35"/>
        <end position="540"/>
    </location>
</feature>
<protein>
    <recommendedName>
        <fullName>Probable glucans biosynthesis protein D</fullName>
    </recommendedName>
</protein>
<reference key="1">
    <citation type="journal article" date="2002" name="Nat. Biotechnol.">
        <title>Genome sequence of the dissimilatory metal ion-reducing bacterium Shewanella oneidensis.</title>
        <authorList>
            <person name="Heidelberg J.F."/>
            <person name="Paulsen I.T."/>
            <person name="Nelson K.E."/>
            <person name="Gaidos E.J."/>
            <person name="Nelson W.C."/>
            <person name="Read T.D."/>
            <person name="Eisen J.A."/>
            <person name="Seshadri R."/>
            <person name="Ward N.L."/>
            <person name="Methe B.A."/>
            <person name="Clayton R.A."/>
            <person name="Meyer T."/>
            <person name="Tsapin A."/>
            <person name="Scott J."/>
            <person name="Beanan M.J."/>
            <person name="Brinkac L.M."/>
            <person name="Daugherty S.C."/>
            <person name="DeBoy R.T."/>
            <person name="Dodson R.J."/>
            <person name="Durkin A.S."/>
            <person name="Haft D.H."/>
            <person name="Kolonay J.F."/>
            <person name="Madupu R."/>
            <person name="Peterson J.D."/>
            <person name="Umayam L.A."/>
            <person name="White O."/>
            <person name="Wolf A.M."/>
            <person name="Vamathevan J.J."/>
            <person name="Weidman J.F."/>
            <person name="Impraim M."/>
            <person name="Lee K."/>
            <person name="Berry K.J."/>
            <person name="Lee C."/>
            <person name="Mueller J."/>
            <person name="Khouri H.M."/>
            <person name="Gill J."/>
            <person name="Utterback T.R."/>
            <person name="McDonald L.A."/>
            <person name="Feldblyum T.V."/>
            <person name="Smith H.O."/>
            <person name="Venter J.C."/>
            <person name="Nealson K.H."/>
            <person name="Fraser C.M."/>
        </authorList>
    </citation>
    <scope>NUCLEOTIDE SEQUENCE [LARGE SCALE GENOMIC DNA]</scope>
    <source>
        <strain>ATCC 700550 / JCM 31522 / CIP 106686 / LMG 19005 / NCIMB 14063 / MR-1</strain>
    </source>
</reference>
<accession>Q8EI02</accession>
<gene>
    <name type="primary">opgD</name>
    <name type="ordered locus">SO_1051</name>
</gene>
<organism>
    <name type="scientific">Shewanella oneidensis (strain ATCC 700550 / JCM 31522 / CIP 106686 / LMG 19005 / NCIMB 14063 / MR-1)</name>
    <dbReference type="NCBI Taxonomy" id="211586"/>
    <lineage>
        <taxon>Bacteria</taxon>
        <taxon>Pseudomonadati</taxon>
        <taxon>Pseudomonadota</taxon>
        <taxon>Gammaproteobacteria</taxon>
        <taxon>Alteromonadales</taxon>
        <taxon>Shewanellaceae</taxon>
        <taxon>Shewanella</taxon>
    </lineage>
</organism>
<keyword id="KW-0574">Periplasm</keyword>
<keyword id="KW-1185">Reference proteome</keyword>
<keyword id="KW-0732">Signal</keyword>
<sequence length="540" mass="61245">MPSLEAPSTRSRLQRMVGSVLLTCSVLLSLSACAAGKASAPQEEEFSYAWLKGYAHTLATESYVSHKGELPKSLQGMSWDDYQQFHFKKKAALWREDDSEFRAELFHLGLYFDTPVHIYQLENGKAKRIEYSPSMFDYGKSKVKGSQLPKDLGFAGFRMQFNTDWQRDVVAFLGASYFRAVGQEMQYGLSARGLAVDTALPKPEEFPMFTRFWLEKPQPGSNIATVYALLDSPSVTGAYRFDIEPGERLKMKVDAAIYPRKAIERLGVAPLTSMFMVGENDRRTGYDWRQEIHDSDGLAMHTGNGEWIWRPLGNPSNLRFNAYSDENPKGFGLLQRDRNFDHYQDDGVFYEKRPSLWIEPTGNWGKGSVQLVEIPTLDETFDNIVAFWNPAEPIQPGQELLYSYNMYWGGIPPEQSPRARVVDTFTGIGGVVGQKRKYYSKRFVIDFAGGSLPMLGKDAQVKAVISTSQGRVEIESARPQHAINGYRAMFDIVPPEDSVEPINLRVYLEVDGQPLTETWMYQWTPPPMNERELHNAGHLQ</sequence>